<organism>
    <name type="scientific">Chlorella vulgaris</name>
    <name type="common">Green alga</name>
    <dbReference type="NCBI Taxonomy" id="3077"/>
    <lineage>
        <taxon>Eukaryota</taxon>
        <taxon>Viridiplantae</taxon>
        <taxon>Chlorophyta</taxon>
        <taxon>core chlorophytes</taxon>
        <taxon>Trebouxiophyceae</taxon>
        <taxon>Chlorellales</taxon>
        <taxon>Chlorellaceae</taxon>
        <taxon>Chlorella clade</taxon>
        <taxon>Chlorella</taxon>
    </lineage>
</organism>
<name>PETG_CHLVU</name>
<comment type="function">
    <text evidence="1">Component of the cytochrome b6-f complex, which mediates electron transfer between photosystem II (PSII) and photosystem I (PSI), cyclic electron flow around PSI, and state transitions. PetG is required for either the stability or assembly of the cytochrome b6-f complex.</text>
</comment>
<comment type="subunit">
    <text evidence="1">The 4 large subunits of the cytochrome b6-f complex are cytochrome b6, subunit IV (17 kDa polypeptide, PetD), cytochrome f and the Rieske protein, while the 4 small subunits are PetG, PetL, PetM and PetN. The complex functions as a dimer.</text>
</comment>
<comment type="subcellular location">
    <subcellularLocation>
        <location evidence="1">Plastid</location>
        <location evidence="1">Chloroplast thylakoid membrane</location>
        <topology evidence="1">Single-pass membrane protein</topology>
    </subcellularLocation>
</comment>
<comment type="similarity">
    <text evidence="1">Belongs to the PetG family.</text>
</comment>
<gene>
    <name evidence="1" type="primary">petG</name>
</gene>
<keyword id="KW-0150">Chloroplast</keyword>
<keyword id="KW-0249">Electron transport</keyword>
<keyword id="KW-0472">Membrane</keyword>
<keyword id="KW-0602">Photosynthesis</keyword>
<keyword id="KW-0934">Plastid</keyword>
<keyword id="KW-0793">Thylakoid</keyword>
<keyword id="KW-0812">Transmembrane</keyword>
<keyword id="KW-1133">Transmembrane helix</keyword>
<keyword id="KW-0813">Transport</keyword>
<dbReference type="EMBL" id="AB001684">
    <property type="protein sequence ID" value="BAA57984.1"/>
    <property type="molecule type" value="Genomic_DNA"/>
</dbReference>
<dbReference type="PIR" id="T07336">
    <property type="entry name" value="T07336"/>
</dbReference>
<dbReference type="RefSeq" id="NP_045908.1">
    <property type="nucleotide sequence ID" value="NC_001865.1"/>
</dbReference>
<dbReference type="SMR" id="P56305"/>
<dbReference type="GeneID" id="809126"/>
<dbReference type="OrthoDB" id="35473at2759"/>
<dbReference type="GO" id="GO:0009535">
    <property type="term" value="C:chloroplast thylakoid membrane"/>
    <property type="evidence" value="ECO:0007669"/>
    <property type="project" value="UniProtKB-SubCell"/>
</dbReference>
<dbReference type="GO" id="GO:0009512">
    <property type="term" value="C:cytochrome b6f complex"/>
    <property type="evidence" value="ECO:0007669"/>
    <property type="project" value="InterPro"/>
</dbReference>
<dbReference type="GO" id="GO:0045158">
    <property type="term" value="F:electron transporter, transferring electrons within cytochrome b6/f complex of photosystem II activity"/>
    <property type="evidence" value="ECO:0007669"/>
    <property type="project" value="UniProtKB-UniRule"/>
</dbReference>
<dbReference type="GO" id="GO:0017004">
    <property type="term" value="P:cytochrome complex assembly"/>
    <property type="evidence" value="ECO:0007669"/>
    <property type="project" value="UniProtKB-UniRule"/>
</dbReference>
<dbReference type="GO" id="GO:0015979">
    <property type="term" value="P:photosynthesis"/>
    <property type="evidence" value="ECO:0007669"/>
    <property type="project" value="UniProtKB-KW"/>
</dbReference>
<dbReference type="HAMAP" id="MF_00432">
    <property type="entry name" value="Cytb6_f_PetG"/>
    <property type="match status" value="1"/>
</dbReference>
<dbReference type="InterPro" id="IPR003683">
    <property type="entry name" value="Cyt_6/f_cplx_su5"/>
</dbReference>
<dbReference type="InterPro" id="IPR036099">
    <property type="entry name" value="Cyt_6/f_cplx_su5_sf"/>
</dbReference>
<dbReference type="NCBIfam" id="NF001907">
    <property type="entry name" value="PRK00665.1"/>
    <property type="match status" value="1"/>
</dbReference>
<dbReference type="Pfam" id="PF02529">
    <property type="entry name" value="PetG"/>
    <property type="match status" value="1"/>
</dbReference>
<dbReference type="PIRSF" id="PIRSF000034">
    <property type="entry name" value="Cyt_b6-f_V"/>
    <property type="match status" value="1"/>
</dbReference>
<dbReference type="SUPFAM" id="SSF103446">
    <property type="entry name" value="PetG subunit of the cytochrome b6f complex"/>
    <property type="match status" value="1"/>
</dbReference>
<proteinExistence type="inferred from homology"/>
<feature type="chain" id="PRO_0000216377" description="Cytochrome b6-f complex subunit 5">
    <location>
        <begin position="1"/>
        <end position="37"/>
    </location>
</feature>
<feature type="transmembrane region" description="Helical" evidence="1">
    <location>
        <begin position="5"/>
        <end position="25"/>
    </location>
</feature>
<evidence type="ECO:0000255" key="1">
    <source>
        <dbReference type="HAMAP-Rule" id="MF_00432"/>
    </source>
</evidence>
<accession>P56305</accession>
<geneLocation type="chloroplast"/>
<sequence>MVEALLSGIVLGLVPVTIAGLFVTAYLQYRRGDQLNI</sequence>
<reference key="1">
    <citation type="journal article" date="1997" name="Proc. Natl. Acad. Sci. U.S.A.">
        <title>Complete nucleotide sequence of the chloroplast genome from the green alga Chlorella vulgaris: the existence of genes possibly involved in chloroplast division.</title>
        <authorList>
            <person name="Wakasugi T."/>
            <person name="Nagai T."/>
            <person name="Kapoor M."/>
            <person name="Sugita M."/>
            <person name="Ito M."/>
            <person name="Ito S."/>
            <person name="Tsudzuki J."/>
            <person name="Nakashima K."/>
            <person name="Tsudzuki T."/>
            <person name="Suzuki Y."/>
            <person name="Hamada A."/>
            <person name="Ohta T."/>
            <person name="Inamura A."/>
            <person name="Yoshinaga K."/>
            <person name="Sugiura M."/>
        </authorList>
    </citation>
    <scope>NUCLEOTIDE SEQUENCE [LARGE SCALE GENOMIC DNA]</scope>
    <source>
        <strain>IAM C-27 / Tamiya</strain>
    </source>
</reference>
<protein>
    <recommendedName>
        <fullName evidence="1">Cytochrome b6-f complex subunit 5</fullName>
    </recommendedName>
    <alternativeName>
        <fullName evidence="1">Cytochrome b6-f complex subunit PetG</fullName>
    </alternativeName>
    <alternativeName>
        <fullName evidence="1">Cytochrome b6-f complex subunit V</fullName>
    </alternativeName>
</protein>